<protein>
    <recommendedName>
        <fullName evidence="1">ATP-dependent lipid A-core flippase 2</fullName>
        <ecNumber evidence="1">7.5.2.6</ecNumber>
    </recommendedName>
    <alternativeName>
        <fullName evidence="1">Lipid A export ATP-binding/permease protein MsbA 2</fullName>
    </alternativeName>
</protein>
<evidence type="ECO:0000255" key="1">
    <source>
        <dbReference type="HAMAP-Rule" id="MF_01703"/>
    </source>
</evidence>
<evidence type="ECO:0000305" key="2"/>
<comment type="function">
    <text evidence="1">Involved in lipopolysaccharide (LPS) biosynthesis. Translocates lipid A-core from the inner to the outer leaflet of the inner membrane. Transmembrane domains (TMD) form a pore in the inner membrane and the ATP-binding domain (NBD) is responsible for energy generation.</text>
</comment>
<comment type="catalytic activity">
    <reaction evidence="1">
        <text>ATP + H2O + lipid A-core oligosaccharideSide 1 = ADP + phosphate + lipid A-core oligosaccharideSide 2.</text>
        <dbReference type="EC" id="7.5.2.6"/>
    </reaction>
</comment>
<comment type="subunit">
    <text evidence="1">Homodimer.</text>
</comment>
<comment type="subcellular location">
    <subcellularLocation>
        <location evidence="1">Cell inner membrane</location>
        <topology evidence="1">Multi-pass membrane protein</topology>
    </subcellularLocation>
</comment>
<comment type="domain">
    <text evidence="1">In MsbA the ATP-binding domain (NBD) and the transmembrane domain (TMD) are fused.</text>
</comment>
<comment type="similarity">
    <text evidence="1">Belongs to the ABC transporter superfamily. Lipid exporter (TC 3.A.1.106) family.</text>
</comment>
<comment type="sequence caution" evidence="2">
    <conflict type="erroneous initiation">
        <sequence resource="EMBL-CDS" id="AAZ25842"/>
    </conflict>
</comment>
<reference key="1">
    <citation type="journal article" date="2005" name="Proc. Natl. Acad. Sci. U.S.A.">
        <title>The psychrophilic lifestyle as revealed by the genome sequence of Colwellia psychrerythraea 34H through genomic and proteomic analyses.</title>
        <authorList>
            <person name="Methe B.A."/>
            <person name="Nelson K.E."/>
            <person name="Deming J.W."/>
            <person name="Momen B."/>
            <person name="Melamud E."/>
            <person name="Zhang X."/>
            <person name="Moult J."/>
            <person name="Madupu R."/>
            <person name="Nelson W.C."/>
            <person name="Dodson R.J."/>
            <person name="Brinkac L.M."/>
            <person name="Daugherty S.C."/>
            <person name="Durkin A.S."/>
            <person name="DeBoy R.T."/>
            <person name="Kolonay J.F."/>
            <person name="Sullivan S.A."/>
            <person name="Zhou L."/>
            <person name="Davidsen T.M."/>
            <person name="Wu M."/>
            <person name="Huston A.L."/>
            <person name="Lewis M."/>
            <person name="Weaver B."/>
            <person name="Weidman J.F."/>
            <person name="Khouri H."/>
            <person name="Utterback T.R."/>
            <person name="Feldblyum T.V."/>
            <person name="Fraser C.M."/>
        </authorList>
    </citation>
    <scope>NUCLEOTIDE SEQUENCE [LARGE SCALE GENOMIC DNA]</scope>
    <source>
        <strain>34H / ATCC BAA-681</strain>
    </source>
</reference>
<feature type="chain" id="PRO_0000271622" description="ATP-dependent lipid A-core flippase 2">
    <location>
        <begin position="1"/>
        <end position="584"/>
    </location>
</feature>
<feature type="transmembrane region" description="Helical" evidence="1">
    <location>
        <begin position="32"/>
        <end position="52"/>
    </location>
</feature>
<feature type="transmembrane region" description="Helical" evidence="1">
    <location>
        <begin position="68"/>
        <end position="88"/>
    </location>
</feature>
<feature type="transmembrane region" description="Helical" evidence="1">
    <location>
        <begin position="146"/>
        <end position="166"/>
    </location>
</feature>
<feature type="transmembrane region" description="Helical" evidence="1">
    <location>
        <begin position="167"/>
        <end position="187"/>
    </location>
</feature>
<feature type="transmembrane region" description="Helical" evidence="1">
    <location>
        <begin position="254"/>
        <end position="274"/>
    </location>
</feature>
<feature type="transmembrane region" description="Helical" evidence="1">
    <location>
        <begin position="280"/>
        <end position="300"/>
    </location>
</feature>
<feature type="domain" description="ABC transmembrane type-1" evidence="1">
    <location>
        <begin position="33"/>
        <end position="315"/>
    </location>
</feature>
<feature type="domain" description="ABC transporter" evidence="1">
    <location>
        <begin position="347"/>
        <end position="583"/>
    </location>
</feature>
<feature type="binding site" evidence="1">
    <location>
        <begin position="381"/>
        <end position="388"/>
    </location>
    <ligand>
        <name>ATP</name>
        <dbReference type="ChEBI" id="CHEBI:30616"/>
    </ligand>
</feature>
<proteinExistence type="inferred from homology"/>
<sequence length="584" mass="64771">MTQVSKTIAKPSGNANLYSRLFSYYRVYKKLIFIALAGLCLFSFVDAGMIYFVKPLIDQGLSKADSHTLQLGALLVVAIFFLRGIASFTSSYAIAYISSKVTYRIRQQAFDKLLYLPRTYFDLNSRGSLISKIIYDTEQLSQSFSSAVVIAIRESVIILVLFSMMVYNSWQLTAIFLVIVPIIALIINKVSKRFKNISHKLQNSMGQVSNKTEQAILNQQEIVLLDTRTQISAQFEKTNNNNRQQNMKLQATSAISNPVIQLIASFAIAAVLLLASIDQVLNQLTPGSFTLILIAMGSLLKPLKQLSNINQQLQKGLIAAKSLFSFLDQQEEHDIGTKQLSKTCSNIRFNNFSFTYQGKTQPALSNFSLQIKGGTSVAFVGESGSGKSTLARLLLRLYQSPKQSILINDIAIEDYSLSSLRAQFAFVSQDIVLIDDTLANNISFGCNRDVTDSEIEQAAINANVMAFAKELPLGLNSEIGENGRNLSGGQRQRIAIARAMLRDASIIVLDEATSALDNHSEKHIQQALTRLTQHKTVLIIAHKLSSIQHVDEIIVINKGRLIEQGNHKTLQAKAGYYQSLYQSQ</sequence>
<accession>Q480N3</accession>
<organism>
    <name type="scientific">Colwellia psychrerythraea (strain 34H / ATCC BAA-681)</name>
    <name type="common">Vibrio psychroerythus</name>
    <dbReference type="NCBI Taxonomy" id="167879"/>
    <lineage>
        <taxon>Bacteria</taxon>
        <taxon>Pseudomonadati</taxon>
        <taxon>Pseudomonadota</taxon>
        <taxon>Gammaproteobacteria</taxon>
        <taxon>Alteromonadales</taxon>
        <taxon>Colwelliaceae</taxon>
        <taxon>Colwellia</taxon>
    </lineage>
</organism>
<keyword id="KW-0067">ATP-binding</keyword>
<keyword id="KW-0997">Cell inner membrane</keyword>
<keyword id="KW-1003">Cell membrane</keyword>
<keyword id="KW-0445">Lipid transport</keyword>
<keyword id="KW-0472">Membrane</keyword>
<keyword id="KW-0547">Nucleotide-binding</keyword>
<keyword id="KW-1278">Translocase</keyword>
<keyword id="KW-0812">Transmembrane</keyword>
<keyword id="KW-1133">Transmembrane helix</keyword>
<keyword id="KW-0813">Transport</keyword>
<dbReference type="EC" id="7.5.2.6" evidence="1"/>
<dbReference type="EMBL" id="CP000083">
    <property type="protein sequence ID" value="AAZ25842.1"/>
    <property type="status" value="ALT_INIT"/>
    <property type="molecule type" value="Genomic_DNA"/>
</dbReference>
<dbReference type="RefSeq" id="WP_041737726.1">
    <property type="nucleotide sequence ID" value="NC_003910.7"/>
</dbReference>
<dbReference type="SMR" id="Q480N3"/>
<dbReference type="STRING" id="167879.CPS_2774"/>
<dbReference type="KEGG" id="cps:CPS_2774"/>
<dbReference type="HOGENOM" id="CLU_000604_84_9_6"/>
<dbReference type="Proteomes" id="UP000000547">
    <property type="component" value="Chromosome"/>
</dbReference>
<dbReference type="GO" id="GO:0005886">
    <property type="term" value="C:plasma membrane"/>
    <property type="evidence" value="ECO:0007669"/>
    <property type="project" value="UniProtKB-SubCell"/>
</dbReference>
<dbReference type="GO" id="GO:0140359">
    <property type="term" value="F:ABC-type transporter activity"/>
    <property type="evidence" value="ECO:0007669"/>
    <property type="project" value="InterPro"/>
</dbReference>
<dbReference type="GO" id="GO:0005524">
    <property type="term" value="F:ATP binding"/>
    <property type="evidence" value="ECO:0007669"/>
    <property type="project" value="UniProtKB-KW"/>
</dbReference>
<dbReference type="GO" id="GO:0016887">
    <property type="term" value="F:ATP hydrolysis activity"/>
    <property type="evidence" value="ECO:0007669"/>
    <property type="project" value="InterPro"/>
</dbReference>
<dbReference type="GO" id="GO:0034040">
    <property type="term" value="F:ATPase-coupled lipid transmembrane transporter activity"/>
    <property type="evidence" value="ECO:0007669"/>
    <property type="project" value="InterPro"/>
</dbReference>
<dbReference type="CDD" id="cd18552">
    <property type="entry name" value="ABC_6TM_MsbA_like"/>
    <property type="match status" value="1"/>
</dbReference>
<dbReference type="FunFam" id="3.40.50.300:FF:000221">
    <property type="entry name" value="Multidrug ABC transporter ATP-binding protein"/>
    <property type="match status" value="1"/>
</dbReference>
<dbReference type="Gene3D" id="1.20.1560.10">
    <property type="entry name" value="ABC transporter type 1, transmembrane domain"/>
    <property type="match status" value="1"/>
</dbReference>
<dbReference type="Gene3D" id="3.40.50.300">
    <property type="entry name" value="P-loop containing nucleotide triphosphate hydrolases"/>
    <property type="match status" value="1"/>
</dbReference>
<dbReference type="InterPro" id="IPR003593">
    <property type="entry name" value="AAA+_ATPase"/>
</dbReference>
<dbReference type="InterPro" id="IPR011527">
    <property type="entry name" value="ABC1_TM_dom"/>
</dbReference>
<dbReference type="InterPro" id="IPR036640">
    <property type="entry name" value="ABC1_TM_sf"/>
</dbReference>
<dbReference type="InterPro" id="IPR003439">
    <property type="entry name" value="ABC_transporter-like_ATP-bd"/>
</dbReference>
<dbReference type="InterPro" id="IPR017871">
    <property type="entry name" value="ABC_transporter-like_CS"/>
</dbReference>
<dbReference type="InterPro" id="IPR011917">
    <property type="entry name" value="ABC_transpr_lipidA"/>
</dbReference>
<dbReference type="InterPro" id="IPR027417">
    <property type="entry name" value="P-loop_NTPase"/>
</dbReference>
<dbReference type="InterPro" id="IPR039421">
    <property type="entry name" value="Type_1_exporter"/>
</dbReference>
<dbReference type="NCBIfam" id="TIGR02203">
    <property type="entry name" value="MsbA_lipidA"/>
    <property type="match status" value="1"/>
</dbReference>
<dbReference type="PANTHER" id="PTHR24221">
    <property type="entry name" value="ATP-BINDING CASSETTE SUB-FAMILY B"/>
    <property type="match status" value="1"/>
</dbReference>
<dbReference type="PANTHER" id="PTHR24221:SF632">
    <property type="entry name" value="ATP-DEPENDENT LIPID A-CORE FLIPPASE"/>
    <property type="match status" value="1"/>
</dbReference>
<dbReference type="Pfam" id="PF00664">
    <property type="entry name" value="ABC_membrane"/>
    <property type="match status" value="1"/>
</dbReference>
<dbReference type="Pfam" id="PF00005">
    <property type="entry name" value="ABC_tran"/>
    <property type="match status" value="1"/>
</dbReference>
<dbReference type="SMART" id="SM00382">
    <property type="entry name" value="AAA"/>
    <property type="match status" value="1"/>
</dbReference>
<dbReference type="SUPFAM" id="SSF90123">
    <property type="entry name" value="ABC transporter transmembrane region"/>
    <property type="match status" value="1"/>
</dbReference>
<dbReference type="SUPFAM" id="SSF52540">
    <property type="entry name" value="P-loop containing nucleoside triphosphate hydrolases"/>
    <property type="match status" value="1"/>
</dbReference>
<dbReference type="PROSITE" id="PS50929">
    <property type="entry name" value="ABC_TM1F"/>
    <property type="match status" value="1"/>
</dbReference>
<dbReference type="PROSITE" id="PS00211">
    <property type="entry name" value="ABC_TRANSPORTER_1"/>
    <property type="match status" value="1"/>
</dbReference>
<dbReference type="PROSITE" id="PS50893">
    <property type="entry name" value="ABC_TRANSPORTER_2"/>
    <property type="match status" value="1"/>
</dbReference>
<dbReference type="PROSITE" id="PS51239">
    <property type="entry name" value="MSBA"/>
    <property type="match status" value="1"/>
</dbReference>
<name>MSBA2_COLP3</name>
<gene>
    <name evidence="1" type="primary">msbA2</name>
    <name type="ordered locus">CPS_2774</name>
</gene>